<comment type="function">
    <text evidence="3">Part of the ABC transporter complex PhnCDE involved in phosphate import. Responsible for energy coupling to the transport system.</text>
</comment>
<comment type="catalytic activity">
    <reaction>
        <text>phosphate(out) + ATP + H2O = ADP + 2 phosphate(in) + H(+)</text>
        <dbReference type="Rhea" id="RHEA:24440"/>
        <dbReference type="ChEBI" id="CHEBI:15377"/>
        <dbReference type="ChEBI" id="CHEBI:15378"/>
        <dbReference type="ChEBI" id="CHEBI:30616"/>
        <dbReference type="ChEBI" id="CHEBI:43474"/>
        <dbReference type="ChEBI" id="CHEBI:456216"/>
        <dbReference type="EC" id="7.3.2.1"/>
    </reaction>
</comment>
<comment type="subunit">
    <text evidence="1">The complex is composed of two ATP-binding proteins (PhnC), two transmembrane proteins (PhnE) and a solute-binding protein (PhnD).</text>
</comment>
<comment type="subcellular location">
    <subcellularLocation>
        <location evidence="1">Cell membrane</location>
        <topology evidence="1">Peripheral membrane protein</topology>
    </subcellularLocation>
</comment>
<comment type="induction">
    <text evidence="3">By phosphate-limited conditions, via derepression by PhnF, and probably also via the two-component regulatory system senX3/regX3.</text>
</comment>
<comment type="similarity">
    <text evidence="4">Belongs to the ABC transporter superfamily. Phosphonate/phosphate importer (TC 3.A.1.9.2) family.</text>
</comment>
<protein>
    <recommendedName>
        <fullName>Phosphate-import ATP-binding protein PhnC</fullName>
        <ecNumber>7.3.2.1</ecNumber>
    </recommendedName>
</protein>
<sequence>MNPVAGDDVVVIARDVTKRFGDTLALDHVSLDVHRSELLVLLGLSGSGKSTLLRCLNGLHPVTSGTVDVGGTRVDQASGAQLRALRRRVGFVFQHFNLVGRLSCLENVLIGGLGRLRLPRYGALTYPRHMRAEALAHLDRVGLADYADRRADTLSGGQQQRVAIARTLMQKPALLLADEPVASLDPENAGVVMDLLFRVCIEEKLTVVCTLHQVDLALGWAHRLVGLQGGRKVLDRPAVGMTRDDVMAVYQRVEPAVTPARRV</sequence>
<accession>A0QQ70</accession>
<accession>I7FWR1</accession>
<keyword id="KW-0067">ATP-binding</keyword>
<keyword id="KW-1003">Cell membrane</keyword>
<keyword id="KW-0472">Membrane</keyword>
<keyword id="KW-0547">Nucleotide-binding</keyword>
<keyword id="KW-0592">Phosphate transport</keyword>
<keyword id="KW-1185">Reference proteome</keyword>
<keyword id="KW-1278">Translocase</keyword>
<keyword id="KW-0813">Transport</keyword>
<dbReference type="EC" id="7.3.2.1"/>
<dbReference type="EMBL" id="CP000480">
    <property type="protein sequence ID" value="ABK73331.1"/>
    <property type="molecule type" value="Genomic_DNA"/>
</dbReference>
<dbReference type="EMBL" id="CP001663">
    <property type="protein sequence ID" value="AFP37112.1"/>
    <property type="molecule type" value="Genomic_DNA"/>
</dbReference>
<dbReference type="RefSeq" id="WP_011727093.1">
    <property type="nucleotide sequence ID" value="NZ_SIJM01000009.1"/>
</dbReference>
<dbReference type="RefSeq" id="YP_885058.1">
    <property type="nucleotide sequence ID" value="NC_008596.1"/>
</dbReference>
<dbReference type="SMR" id="A0QQ70"/>
<dbReference type="STRING" id="246196.MSMEG_0647"/>
<dbReference type="TCDB" id="3.A.1.9.2">
    <property type="family name" value="the atp-binding cassette (abc) superfamily"/>
</dbReference>
<dbReference type="PaxDb" id="246196-MSMEI_0631"/>
<dbReference type="GeneID" id="93455560"/>
<dbReference type="KEGG" id="msb:LJ00_03215"/>
<dbReference type="KEGG" id="msg:MSMEI_0631"/>
<dbReference type="KEGG" id="msm:MSMEG_0647"/>
<dbReference type="PATRIC" id="fig|246196.19.peg.644"/>
<dbReference type="eggNOG" id="COG3638">
    <property type="taxonomic scope" value="Bacteria"/>
</dbReference>
<dbReference type="OrthoDB" id="3190580at2"/>
<dbReference type="Proteomes" id="UP000000757">
    <property type="component" value="Chromosome"/>
</dbReference>
<dbReference type="Proteomes" id="UP000006158">
    <property type="component" value="Chromosome"/>
</dbReference>
<dbReference type="GO" id="GO:0005886">
    <property type="term" value="C:plasma membrane"/>
    <property type="evidence" value="ECO:0007669"/>
    <property type="project" value="UniProtKB-SubCell"/>
</dbReference>
<dbReference type="GO" id="GO:0015416">
    <property type="term" value="F:ABC-type phosphonate transporter activity"/>
    <property type="evidence" value="ECO:0007669"/>
    <property type="project" value="InterPro"/>
</dbReference>
<dbReference type="GO" id="GO:0005524">
    <property type="term" value="F:ATP binding"/>
    <property type="evidence" value="ECO:0007669"/>
    <property type="project" value="UniProtKB-KW"/>
</dbReference>
<dbReference type="GO" id="GO:0016887">
    <property type="term" value="F:ATP hydrolysis activity"/>
    <property type="evidence" value="ECO:0007669"/>
    <property type="project" value="InterPro"/>
</dbReference>
<dbReference type="GO" id="GO:0015415">
    <property type="term" value="F:ATPase-coupled phosphate ion transmembrane transporter activity"/>
    <property type="evidence" value="ECO:0007669"/>
    <property type="project" value="UniProtKB-EC"/>
</dbReference>
<dbReference type="GO" id="GO:0006817">
    <property type="term" value="P:phosphate ion transport"/>
    <property type="evidence" value="ECO:0007669"/>
    <property type="project" value="UniProtKB-KW"/>
</dbReference>
<dbReference type="Gene3D" id="3.40.50.300">
    <property type="entry name" value="P-loop containing nucleotide triphosphate hydrolases"/>
    <property type="match status" value="1"/>
</dbReference>
<dbReference type="InterPro" id="IPR003593">
    <property type="entry name" value="AAA+_ATPase"/>
</dbReference>
<dbReference type="InterPro" id="IPR003439">
    <property type="entry name" value="ABC_transporter-like_ATP-bd"/>
</dbReference>
<dbReference type="InterPro" id="IPR017871">
    <property type="entry name" value="ABC_transporter-like_CS"/>
</dbReference>
<dbReference type="InterPro" id="IPR012693">
    <property type="entry name" value="ABC_transpr_PhnC"/>
</dbReference>
<dbReference type="InterPro" id="IPR050086">
    <property type="entry name" value="MetN_ABC_transporter-like"/>
</dbReference>
<dbReference type="InterPro" id="IPR027417">
    <property type="entry name" value="P-loop_NTPase"/>
</dbReference>
<dbReference type="NCBIfam" id="TIGR02315">
    <property type="entry name" value="ABC_phnC"/>
    <property type="match status" value="1"/>
</dbReference>
<dbReference type="PANTHER" id="PTHR43166">
    <property type="entry name" value="AMINO ACID IMPORT ATP-BINDING PROTEIN"/>
    <property type="match status" value="1"/>
</dbReference>
<dbReference type="PANTHER" id="PTHR43166:SF6">
    <property type="entry name" value="PHOSPHONATES IMPORT ATP-BINDING PROTEIN PHNC"/>
    <property type="match status" value="1"/>
</dbReference>
<dbReference type="Pfam" id="PF00005">
    <property type="entry name" value="ABC_tran"/>
    <property type="match status" value="1"/>
</dbReference>
<dbReference type="SMART" id="SM00382">
    <property type="entry name" value="AAA"/>
    <property type="match status" value="1"/>
</dbReference>
<dbReference type="SUPFAM" id="SSF52540">
    <property type="entry name" value="P-loop containing nucleoside triphosphate hydrolases"/>
    <property type="match status" value="1"/>
</dbReference>
<dbReference type="PROSITE" id="PS00211">
    <property type="entry name" value="ABC_TRANSPORTER_1"/>
    <property type="match status" value="1"/>
</dbReference>
<dbReference type="PROSITE" id="PS50893">
    <property type="entry name" value="ABC_TRANSPORTER_2"/>
    <property type="match status" value="1"/>
</dbReference>
<dbReference type="PROSITE" id="PS51249">
    <property type="entry name" value="PHNC"/>
    <property type="match status" value="1"/>
</dbReference>
<evidence type="ECO:0000250" key="1"/>
<evidence type="ECO:0000255" key="2"/>
<evidence type="ECO:0000269" key="3">
    <source>
    </source>
</evidence>
<evidence type="ECO:0000305" key="4"/>
<proteinExistence type="evidence at protein level"/>
<organism>
    <name type="scientific">Mycolicibacterium smegmatis (strain ATCC 700084 / mc(2)155)</name>
    <name type="common">Mycobacterium smegmatis</name>
    <dbReference type="NCBI Taxonomy" id="246196"/>
    <lineage>
        <taxon>Bacteria</taxon>
        <taxon>Bacillati</taxon>
        <taxon>Actinomycetota</taxon>
        <taxon>Actinomycetes</taxon>
        <taxon>Mycobacteriales</taxon>
        <taxon>Mycobacteriaceae</taxon>
        <taxon>Mycolicibacterium</taxon>
    </lineage>
</organism>
<reference key="1">
    <citation type="submission" date="2006-10" db="EMBL/GenBank/DDBJ databases">
        <authorList>
            <person name="Fleischmann R.D."/>
            <person name="Dodson R.J."/>
            <person name="Haft D.H."/>
            <person name="Merkel J.S."/>
            <person name="Nelson W.C."/>
            <person name="Fraser C.M."/>
        </authorList>
    </citation>
    <scope>NUCLEOTIDE SEQUENCE [LARGE SCALE GENOMIC DNA]</scope>
    <source>
        <strain>ATCC 700084 / mc(2)155</strain>
    </source>
</reference>
<reference key="2">
    <citation type="journal article" date="2007" name="Genome Biol.">
        <title>Interrupted coding sequences in Mycobacterium smegmatis: authentic mutations or sequencing errors?</title>
        <authorList>
            <person name="Deshayes C."/>
            <person name="Perrodou E."/>
            <person name="Gallien S."/>
            <person name="Euphrasie D."/>
            <person name="Schaeffer C."/>
            <person name="Van-Dorsselaer A."/>
            <person name="Poch O."/>
            <person name="Lecompte O."/>
            <person name="Reyrat J.-M."/>
        </authorList>
    </citation>
    <scope>NUCLEOTIDE SEQUENCE [LARGE SCALE GENOMIC DNA]</scope>
    <source>
        <strain>ATCC 700084 / mc(2)155</strain>
    </source>
</reference>
<reference key="3">
    <citation type="journal article" date="2009" name="Genome Res.">
        <title>Ortho-proteogenomics: multiple proteomes investigation through orthology and a new MS-based protocol.</title>
        <authorList>
            <person name="Gallien S."/>
            <person name="Perrodou E."/>
            <person name="Carapito C."/>
            <person name="Deshayes C."/>
            <person name="Reyrat J.-M."/>
            <person name="Van Dorsselaer A."/>
            <person name="Poch O."/>
            <person name="Schaeffer C."/>
            <person name="Lecompte O."/>
        </authorList>
    </citation>
    <scope>NUCLEOTIDE SEQUENCE [LARGE SCALE GENOMIC DNA]</scope>
    <source>
        <strain>ATCC 700084 / mc(2)155</strain>
    </source>
</reference>
<reference key="4">
    <citation type="journal article" date="2005" name="Microbiology">
        <title>Mutants of Mycobacterium smegmatis unable to grow at acidic pH in the presence of the protonophore carbonyl cyanide m-chlorophenylhydrazone.</title>
        <authorList>
            <person name="Tran S.L."/>
            <person name="Rao M."/>
            <person name="Simmers C."/>
            <person name="Gebhard S."/>
            <person name="Olsson K."/>
            <person name="Cook G.M."/>
        </authorList>
    </citation>
    <scope>INVOLVEMENT IN PHOSPHATE ASSIMILATION</scope>
    <scope>GENE NAME</scope>
</reference>
<reference key="5">
    <citation type="journal article" date="2006" name="Microbiology">
        <title>The Phn system of Mycobacterium smegmatis: a second high-affinity ABC-transporter for phosphate.</title>
        <authorList>
            <person name="Gebhard S."/>
            <person name="Tran S.L."/>
            <person name="Cook G.M."/>
        </authorList>
    </citation>
    <scope>FUNCTION IN PHOSPHATE TRANSPORT</scope>
    <scope>INDUCTION</scope>
</reference>
<feature type="chain" id="PRO_0000357468" description="Phosphate-import ATP-binding protein PhnC">
    <location>
        <begin position="1"/>
        <end position="263"/>
    </location>
</feature>
<feature type="domain" description="ABC transporter">
    <location>
        <begin position="11"/>
        <end position="254"/>
    </location>
</feature>
<feature type="binding site" evidence="2">
    <location>
        <begin position="43"/>
        <end position="50"/>
    </location>
    <ligand>
        <name>ATP</name>
        <dbReference type="ChEBI" id="CHEBI:30616"/>
    </ligand>
</feature>
<name>PHNC_MYCS2</name>
<gene>
    <name type="primary">phnC</name>
    <name type="ordered locus">MSMEG_0647</name>
    <name type="ordered locus">MSMEI_0631</name>
</gene>